<proteinExistence type="evidence at transcript level"/>
<organism>
    <name type="scientific">Meriones unguiculatus</name>
    <name type="common">Mongolian jird</name>
    <name type="synonym">Gerbillus unguiculatus</name>
    <dbReference type="NCBI Taxonomy" id="10047"/>
    <lineage>
        <taxon>Eukaryota</taxon>
        <taxon>Metazoa</taxon>
        <taxon>Chordata</taxon>
        <taxon>Craniata</taxon>
        <taxon>Vertebrata</taxon>
        <taxon>Euteleostomi</taxon>
        <taxon>Mammalia</taxon>
        <taxon>Eutheria</taxon>
        <taxon>Euarchontoglires</taxon>
        <taxon>Glires</taxon>
        <taxon>Rodentia</taxon>
        <taxon>Myomorpha</taxon>
        <taxon>Muroidea</taxon>
        <taxon>Muridae</taxon>
        <taxon>Gerbillinae</taxon>
        <taxon>Meriones</taxon>
    </lineage>
</organism>
<reference key="1">
    <citation type="journal article" date="1999" name="J. Membr. Biol.">
        <title>Beta1-adrenergic receptors but not beta2-adrenergic or vasopressin receptors regulate K+ secretion in vestibular dark cells of the inner ear.</title>
        <authorList>
            <person name="Wangemann P."/>
            <person name="Liu J."/>
            <person name="Shimozono M."/>
            <person name="Scofield M.A."/>
        </authorList>
    </citation>
    <scope>NUCLEOTIDE SEQUENCE [MRNA]</scope>
    <source>
        <tissue>Adipose tissue</tissue>
        <tissue>Brain</tissue>
        <tissue>Stria vascularis</tissue>
    </source>
</reference>
<dbReference type="EMBL" id="AF055351">
    <property type="protein sequence ID" value="AAC12769.1"/>
    <property type="molecule type" value="mRNA"/>
</dbReference>
<dbReference type="SMR" id="O70432"/>
<dbReference type="GO" id="GO:0005886">
    <property type="term" value="C:plasma membrane"/>
    <property type="evidence" value="ECO:0007669"/>
    <property type="project" value="UniProtKB-SubCell"/>
</dbReference>
<dbReference type="GO" id="GO:0015052">
    <property type="term" value="F:beta3-adrenergic receptor activity"/>
    <property type="evidence" value="ECO:0007669"/>
    <property type="project" value="TreeGrafter"/>
</dbReference>
<dbReference type="GO" id="GO:0051379">
    <property type="term" value="F:epinephrine binding"/>
    <property type="evidence" value="ECO:0007669"/>
    <property type="project" value="TreeGrafter"/>
</dbReference>
<dbReference type="GO" id="GO:0071880">
    <property type="term" value="P:adenylate cyclase-activating adrenergic receptor signaling pathway"/>
    <property type="evidence" value="ECO:0007669"/>
    <property type="project" value="TreeGrafter"/>
</dbReference>
<dbReference type="GO" id="GO:0002025">
    <property type="term" value="P:norepinephrine-epinephrine-mediated vasodilation involved in regulation of systemic arterial blood pressure"/>
    <property type="evidence" value="ECO:0007669"/>
    <property type="project" value="TreeGrafter"/>
</dbReference>
<dbReference type="GO" id="GO:0043410">
    <property type="term" value="P:positive regulation of MAPK cascade"/>
    <property type="evidence" value="ECO:0007669"/>
    <property type="project" value="TreeGrafter"/>
</dbReference>
<dbReference type="Gene3D" id="1.20.1070.10">
    <property type="entry name" value="Rhodopsin 7-helix transmembrane proteins"/>
    <property type="match status" value="1"/>
</dbReference>
<dbReference type="InterPro" id="IPR000681">
    <property type="entry name" value="ADRB3_rcpt"/>
</dbReference>
<dbReference type="InterPro" id="IPR000276">
    <property type="entry name" value="GPCR_Rhodpsn"/>
</dbReference>
<dbReference type="InterPro" id="IPR017452">
    <property type="entry name" value="GPCR_Rhodpsn_7TM"/>
</dbReference>
<dbReference type="PANTHER" id="PTHR24248">
    <property type="entry name" value="ADRENERGIC RECEPTOR-RELATED G-PROTEIN COUPLED RECEPTOR"/>
    <property type="match status" value="1"/>
</dbReference>
<dbReference type="PANTHER" id="PTHR24248:SF3">
    <property type="entry name" value="BETA-3 ADRENERGIC RECEPTOR"/>
    <property type="match status" value="1"/>
</dbReference>
<dbReference type="Pfam" id="PF00001">
    <property type="entry name" value="7tm_1"/>
    <property type="match status" value="1"/>
</dbReference>
<dbReference type="PRINTS" id="PR00563">
    <property type="entry name" value="ADRENRGCB3AR"/>
</dbReference>
<dbReference type="PRINTS" id="PR00237">
    <property type="entry name" value="GPCRRHODOPSN"/>
</dbReference>
<dbReference type="SUPFAM" id="SSF81321">
    <property type="entry name" value="Family A G protein-coupled receptor-like"/>
    <property type="match status" value="1"/>
</dbReference>
<dbReference type="PROSITE" id="PS50262">
    <property type="entry name" value="G_PROTEIN_RECEP_F1_2"/>
    <property type="match status" value="1"/>
</dbReference>
<sequence>RVGADAEAQECHSNPRCCSFASNMPYALLSSSVSFYLPLLVMLFVYARVFVVAKRQRRLLRRELGRFPPEESPRSPSRSPSPVAGGTGEAPDGVPSCGRRPARLLPLREHRALRTLGLIMGIFSLCWLPFFLANVLRALAGPSIVPNGVFIALNWLGYANSAFNPLI</sequence>
<comment type="function">
    <text>Beta-adrenergic receptors mediate the catecholamine-induced activation of adenylate cyclase through the action of G proteins. Beta-3 is involved in the regulation of lipolysis and thermogenesis.</text>
</comment>
<comment type="subunit">
    <text evidence="2">Interacts with ARRDC3.</text>
</comment>
<comment type="subcellular location">
    <subcellularLocation>
        <location evidence="1">Cell membrane</location>
        <topology evidence="1">Multi-pass membrane protein</topology>
    </subcellularLocation>
</comment>
<comment type="similarity">
    <text evidence="3">Belongs to the G-protein coupled receptor 1 family. Adrenergic receptor subfamily. ADRB3 sub-subfamily.</text>
</comment>
<evidence type="ECO:0000250" key="1"/>
<evidence type="ECO:0000250" key="2">
    <source>
        <dbReference type="UniProtKB" id="P13945"/>
    </source>
</evidence>
<evidence type="ECO:0000255" key="3">
    <source>
        <dbReference type="PROSITE-ProRule" id="PRU00521"/>
    </source>
</evidence>
<evidence type="ECO:0000256" key="4">
    <source>
        <dbReference type="SAM" id="MobiDB-lite"/>
    </source>
</evidence>
<keyword id="KW-1003">Cell membrane</keyword>
<keyword id="KW-1015">Disulfide bond</keyword>
<keyword id="KW-0297">G-protein coupled receptor</keyword>
<keyword id="KW-0472">Membrane</keyword>
<keyword id="KW-0675">Receptor</keyword>
<keyword id="KW-0807">Transducer</keyword>
<keyword id="KW-0812">Transmembrane</keyword>
<keyword id="KW-1133">Transmembrane helix</keyword>
<name>ADRB3_MERUN</name>
<gene>
    <name type="primary">ADRB3</name>
</gene>
<accession>O70432</accession>
<protein>
    <recommendedName>
        <fullName>Beta-3 adrenergic receptor</fullName>
    </recommendedName>
    <alternativeName>
        <fullName>Beta-3 adrenoreceptor</fullName>
        <shortName>Beta-3 adrenoceptor</shortName>
    </alternativeName>
</protein>
<feature type="chain" id="PRO_0000069145" description="Beta-3 adrenergic receptor">
    <location>
        <begin position="1" status="less than"/>
        <end position="167" status="greater than"/>
    </location>
</feature>
<feature type="topological domain" description="Extracellular" evidence="1">
    <location>
        <begin position="1" status="less than"/>
        <end position="25"/>
    </location>
</feature>
<feature type="transmembrane region" description="Helical; Name=5" evidence="1">
    <location>
        <begin position="26"/>
        <end position="47"/>
    </location>
</feature>
<feature type="topological domain" description="Cytoplasmic" evidence="1">
    <location>
        <begin position="48"/>
        <end position="114"/>
    </location>
</feature>
<feature type="transmembrane region" description="Helical; Name=6" evidence="1">
    <location>
        <begin position="115"/>
        <end position="136"/>
    </location>
</feature>
<feature type="topological domain" description="Extracellular" evidence="1">
    <location>
        <begin position="137"/>
        <end position="148"/>
    </location>
</feature>
<feature type="transmembrane region" description="Helical; Name=7" evidence="1">
    <location>
        <begin position="149"/>
        <end position="167" status="greater than"/>
    </location>
</feature>
<feature type="region of interest" description="Disordered" evidence="4">
    <location>
        <begin position="66"/>
        <end position="97"/>
    </location>
</feature>
<feature type="disulfide bond" evidence="3">
    <location>
        <begin position="11"/>
        <end position="17"/>
    </location>
</feature>
<feature type="non-terminal residue">
    <location>
        <position position="1"/>
    </location>
</feature>
<feature type="non-terminal residue">
    <location>
        <position position="167"/>
    </location>
</feature>